<feature type="chain" id="PRO_1000068618" description="UPF0325 protein Ent638_0703">
    <location>
        <begin position="1"/>
        <end position="129"/>
    </location>
</feature>
<sequence length="129" mass="15228">MYDNLKSLGITNPDEIDRYSLRQEANNDILKIYFHKDKGEFFAKSVKFKYPRQRKTVVADGVGQGYKEVQEISPNLRYVIDELDQICQRDRTEVDLKRKILDDLRHLESVVTHKISEIEADLEKLTRNK</sequence>
<gene>
    <name type="ordered locus">Ent638_0703</name>
</gene>
<proteinExistence type="inferred from homology"/>
<accession>A4W6R0</accession>
<organism>
    <name type="scientific">Enterobacter sp. (strain 638)</name>
    <dbReference type="NCBI Taxonomy" id="399742"/>
    <lineage>
        <taxon>Bacteria</taxon>
        <taxon>Pseudomonadati</taxon>
        <taxon>Pseudomonadota</taxon>
        <taxon>Gammaproteobacteria</taxon>
        <taxon>Enterobacterales</taxon>
        <taxon>Enterobacteriaceae</taxon>
        <taxon>Enterobacter</taxon>
    </lineage>
</organism>
<reference key="1">
    <citation type="journal article" date="2010" name="PLoS Genet.">
        <title>Genome sequence of the plant growth promoting endophytic bacterium Enterobacter sp. 638.</title>
        <authorList>
            <person name="Taghavi S."/>
            <person name="van der Lelie D."/>
            <person name="Hoffman A."/>
            <person name="Zhang Y.B."/>
            <person name="Walla M.D."/>
            <person name="Vangronsveld J."/>
            <person name="Newman L."/>
            <person name="Monchy S."/>
        </authorList>
    </citation>
    <scope>NUCLEOTIDE SEQUENCE [LARGE SCALE GENOMIC DNA]</scope>
    <source>
        <strain>638</strain>
    </source>
</reference>
<dbReference type="EMBL" id="CP000653">
    <property type="protein sequence ID" value="ABP59390.1"/>
    <property type="molecule type" value="Genomic_DNA"/>
</dbReference>
<dbReference type="RefSeq" id="WP_012016111.1">
    <property type="nucleotide sequence ID" value="NC_009436.1"/>
</dbReference>
<dbReference type="SMR" id="A4W6R0"/>
<dbReference type="STRING" id="399742.Ent638_0703"/>
<dbReference type="GeneID" id="93307877"/>
<dbReference type="KEGG" id="ent:Ent638_0703"/>
<dbReference type="eggNOG" id="ENOG502ZBV4">
    <property type="taxonomic scope" value="Bacteria"/>
</dbReference>
<dbReference type="HOGENOM" id="CLU_136774_0_0_6"/>
<dbReference type="OrthoDB" id="5624524at2"/>
<dbReference type="Proteomes" id="UP000000230">
    <property type="component" value="Chromosome"/>
</dbReference>
<dbReference type="HAMAP" id="MF_01519">
    <property type="entry name" value="UPF0325"/>
    <property type="match status" value="1"/>
</dbReference>
<dbReference type="InterPro" id="IPR020911">
    <property type="entry name" value="UPF0325"/>
</dbReference>
<dbReference type="NCBIfam" id="NF010213">
    <property type="entry name" value="PRK13677.1"/>
    <property type="match status" value="1"/>
</dbReference>
<dbReference type="Pfam" id="PF11944">
    <property type="entry name" value="DUF3461"/>
    <property type="match status" value="1"/>
</dbReference>
<name>Y703_ENT38</name>
<comment type="similarity">
    <text evidence="1">Belongs to the UPF0325 family.</text>
</comment>
<protein>
    <recommendedName>
        <fullName evidence="1">UPF0325 protein Ent638_0703</fullName>
    </recommendedName>
</protein>
<evidence type="ECO:0000255" key="1">
    <source>
        <dbReference type="HAMAP-Rule" id="MF_01519"/>
    </source>
</evidence>